<name>COBT_PSEFS</name>
<dbReference type="EC" id="2.4.2.21" evidence="1"/>
<dbReference type="EMBL" id="AM181176">
    <property type="protein sequence ID" value="CAY51179.1"/>
    <property type="molecule type" value="Genomic_DNA"/>
</dbReference>
<dbReference type="RefSeq" id="WP_015885234.1">
    <property type="nucleotide sequence ID" value="NC_012660.1"/>
</dbReference>
<dbReference type="SMR" id="C3K0Y8"/>
<dbReference type="STRING" id="294.SRM1_01645"/>
<dbReference type="PATRIC" id="fig|216595.4.peg.4627"/>
<dbReference type="eggNOG" id="COG2038">
    <property type="taxonomic scope" value="Bacteria"/>
</dbReference>
<dbReference type="HOGENOM" id="CLU_002982_0_1_6"/>
<dbReference type="OrthoDB" id="9781491at2"/>
<dbReference type="UniPathway" id="UPA00061">
    <property type="reaction ID" value="UER00516"/>
</dbReference>
<dbReference type="GO" id="GO:0008939">
    <property type="term" value="F:nicotinate-nucleotide-dimethylbenzimidazole phosphoribosyltransferase activity"/>
    <property type="evidence" value="ECO:0007669"/>
    <property type="project" value="UniProtKB-UniRule"/>
</dbReference>
<dbReference type="GO" id="GO:0009236">
    <property type="term" value="P:cobalamin biosynthetic process"/>
    <property type="evidence" value="ECO:0007669"/>
    <property type="project" value="UniProtKB-KW"/>
</dbReference>
<dbReference type="CDD" id="cd02439">
    <property type="entry name" value="DMB-PRT_CobT"/>
    <property type="match status" value="1"/>
</dbReference>
<dbReference type="FunFam" id="3.40.50.10210:FF:000001">
    <property type="entry name" value="Nicotinate-nucleotide--dimethylbenzimidazole phosphoribosyltransferase"/>
    <property type="match status" value="1"/>
</dbReference>
<dbReference type="Gene3D" id="1.10.1610.10">
    <property type="match status" value="1"/>
</dbReference>
<dbReference type="Gene3D" id="3.40.50.10210">
    <property type="match status" value="1"/>
</dbReference>
<dbReference type="HAMAP" id="MF_00230">
    <property type="entry name" value="CobT"/>
    <property type="match status" value="1"/>
</dbReference>
<dbReference type="InterPro" id="IPR003200">
    <property type="entry name" value="Nict_dMeBzImd_PRibTrfase"/>
</dbReference>
<dbReference type="InterPro" id="IPR017846">
    <property type="entry name" value="Nict_dMeBzImd_PRibTrfase_bact"/>
</dbReference>
<dbReference type="InterPro" id="IPR023195">
    <property type="entry name" value="Nict_dMeBzImd_PRibTrfase_N"/>
</dbReference>
<dbReference type="InterPro" id="IPR036087">
    <property type="entry name" value="Nict_dMeBzImd_PRibTrfase_sf"/>
</dbReference>
<dbReference type="NCBIfam" id="TIGR03160">
    <property type="entry name" value="cobT_DBIPRT"/>
    <property type="match status" value="1"/>
</dbReference>
<dbReference type="NCBIfam" id="NF000996">
    <property type="entry name" value="PRK00105.1"/>
    <property type="match status" value="1"/>
</dbReference>
<dbReference type="PANTHER" id="PTHR43463">
    <property type="entry name" value="NICOTINATE-NUCLEOTIDE--DIMETHYLBENZIMIDAZOLE PHOSPHORIBOSYLTRANSFERASE"/>
    <property type="match status" value="1"/>
</dbReference>
<dbReference type="PANTHER" id="PTHR43463:SF1">
    <property type="entry name" value="NICOTINATE-NUCLEOTIDE--DIMETHYLBENZIMIDAZOLE PHOSPHORIBOSYLTRANSFERASE"/>
    <property type="match status" value="1"/>
</dbReference>
<dbReference type="Pfam" id="PF02277">
    <property type="entry name" value="DBI_PRT"/>
    <property type="match status" value="1"/>
</dbReference>
<dbReference type="SUPFAM" id="SSF52733">
    <property type="entry name" value="Nicotinate mononucleotide:5,6-dimethylbenzimidazole phosphoribosyltransferase (CobT)"/>
    <property type="match status" value="1"/>
</dbReference>
<feature type="chain" id="PRO_1000204368" description="Nicotinate-nucleotide--dimethylbenzimidazole phosphoribosyltransferase">
    <location>
        <begin position="1"/>
        <end position="351"/>
    </location>
</feature>
<feature type="active site" description="Proton acceptor" evidence="1">
    <location>
        <position position="317"/>
    </location>
</feature>
<comment type="function">
    <text evidence="1">Catalyzes the synthesis of alpha-ribazole-5'-phosphate from nicotinate mononucleotide (NAMN) and 5,6-dimethylbenzimidazole (DMB).</text>
</comment>
<comment type="catalytic activity">
    <reaction evidence="1">
        <text>5,6-dimethylbenzimidazole + nicotinate beta-D-ribonucleotide = alpha-ribazole 5'-phosphate + nicotinate + H(+)</text>
        <dbReference type="Rhea" id="RHEA:11196"/>
        <dbReference type="ChEBI" id="CHEBI:15378"/>
        <dbReference type="ChEBI" id="CHEBI:15890"/>
        <dbReference type="ChEBI" id="CHEBI:32544"/>
        <dbReference type="ChEBI" id="CHEBI:57502"/>
        <dbReference type="ChEBI" id="CHEBI:57918"/>
        <dbReference type="EC" id="2.4.2.21"/>
    </reaction>
</comment>
<comment type="pathway">
    <text evidence="1">Nucleoside biosynthesis; alpha-ribazole biosynthesis; alpha-ribazole from 5,6-dimethylbenzimidazole: step 1/2.</text>
</comment>
<comment type="similarity">
    <text evidence="1">Belongs to the CobT family.</text>
</comment>
<gene>
    <name evidence="1" type="primary">cobT</name>
    <name type="ordered locus">PFLU_4483</name>
</gene>
<sequence length="351" mass="36088">MTDTWWLNPCKAIDAQAYEQALARQQQLTKPAGSLGQLEALAVQLAGLQGQVKPSVDSLWIAIFAGDHGVVAEGVSAFPQEVTGQMLQNFVTGGAAISVLARQLGAQLEVVDLGTVTPSLDLPGVRHLNIGAGTANFVNGPAMTEAQGQLALQAGRDSAWRALANGAQLFIGGEMGIGNTTAASALACALLDCPVSDLTGPGTGLNAQGVSHKVAVIERALALHAGQRGNALQTLFNLGGFEIAALVGAYLGCAQEGIVVLVDGFICTVAALVATRVNPACREWLVFGHRGAEPGHRHVLQRLDAQPLLELGLRLGEGSGAALAVPLLRLACALHGQMATFAEAAVADRPA</sequence>
<evidence type="ECO:0000255" key="1">
    <source>
        <dbReference type="HAMAP-Rule" id="MF_00230"/>
    </source>
</evidence>
<organism>
    <name type="scientific">Pseudomonas fluorescens (strain SBW25)</name>
    <dbReference type="NCBI Taxonomy" id="216595"/>
    <lineage>
        <taxon>Bacteria</taxon>
        <taxon>Pseudomonadati</taxon>
        <taxon>Pseudomonadota</taxon>
        <taxon>Gammaproteobacteria</taxon>
        <taxon>Pseudomonadales</taxon>
        <taxon>Pseudomonadaceae</taxon>
        <taxon>Pseudomonas</taxon>
    </lineage>
</organism>
<accession>C3K0Y8</accession>
<protein>
    <recommendedName>
        <fullName evidence="1">Nicotinate-nucleotide--dimethylbenzimidazole phosphoribosyltransferase</fullName>
        <shortName evidence="1">NN:DBI PRT</shortName>
        <ecNumber evidence="1">2.4.2.21</ecNumber>
    </recommendedName>
    <alternativeName>
        <fullName evidence="1">N(1)-alpha-phosphoribosyltransferase</fullName>
    </alternativeName>
</protein>
<keyword id="KW-0169">Cobalamin biosynthesis</keyword>
<keyword id="KW-0328">Glycosyltransferase</keyword>
<keyword id="KW-0808">Transferase</keyword>
<proteinExistence type="inferred from homology"/>
<reference key="1">
    <citation type="journal article" date="2009" name="Genome Biol.">
        <title>Genomic and genetic analyses of diversity and plant interactions of Pseudomonas fluorescens.</title>
        <authorList>
            <person name="Silby M.W."/>
            <person name="Cerdeno-Tarraga A.M."/>
            <person name="Vernikos G.S."/>
            <person name="Giddens S.R."/>
            <person name="Jackson R.W."/>
            <person name="Preston G.M."/>
            <person name="Zhang X.-X."/>
            <person name="Moon C.D."/>
            <person name="Gehrig S.M."/>
            <person name="Godfrey S.A.C."/>
            <person name="Knight C.G."/>
            <person name="Malone J.G."/>
            <person name="Robinson Z."/>
            <person name="Spiers A.J."/>
            <person name="Harris S."/>
            <person name="Challis G.L."/>
            <person name="Yaxley A.M."/>
            <person name="Harris D."/>
            <person name="Seeger K."/>
            <person name="Murphy L."/>
            <person name="Rutter S."/>
            <person name="Squares R."/>
            <person name="Quail M.A."/>
            <person name="Saunders E."/>
            <person name="Mavromatis K."/>
            <person name="Brettin T.S."/>
            <person name="Bentley S.D."/>
            <person name="Hothersall J."/>
            <person name="Stephens E."/>
            <person name="Thomas C.M."/>
            <person name="Parkhill J."/>
            <person name="Levy S.B."/>
            <person name="Rainey P.B."/>
            <person name="Thomson N.R."/>
        </authorList>
    </citation>
    <scope>NUCLEOTIDE SEQUENCE [LARGE SCALE GENOMIC DNA]</scope>
    <source>
        <strain>SBW25</strain>
    </source>
</reference>